<reference key="1">
    <citation type="journal article" date="1996" name="Nucleic Acids Res.">
        <title>Identification of a (CUG)n triplet repeat RNA-binding protein and its expression in myotonic dystrophy.</title>
        <authorList>
            <person name="Timchenko L.T."/>
            <person name="Miller J.W."/>
            <person name="Timchenko N.A."/>
            <person name="DeVore D.R."/>
            <person name="Datar K.V."/>
            <person name="Lin L."/>
            <person name="Roberts R."/>
            <person name="Caskey C.T."/>
            <person name="Swanson M.S."/>
        </authorList>
    </citation>
    <scope>NUCLEOTIDE SEQUENCE [MRNA] (ISOFORM 2)</scope>
    <scope>SUBCELLULAR LOCATION</scope>
    <scope>RNA-BINDING</scope>
</reference>
<reference key="2">
    <citation type="journal article" date="2000" name="J. Biol. Chem.">
        <title>A family of human RNA-binding proteins related to the Drosophila Bruno translational regulator.</title>
        <authorList>
            <person name="Good P.J."/>
            <person name="Chen Q."/>
            <person name="Warner S.J."/>
            <person name="Herring D.C."/>
        </authorList>
    </citation>
    <scope>NUCLEOTIDE SEQUENCE [MRNA] (ISOFORM 1)</scope>
    <scope>RNA-BINDING</scope>
    <scope>TISSUE SPECIFICITY</scope>
</reference>
<reference key="3">
    <citation type="journal article" date="2001" name="J. Biochem.">
        <title>Coexpression of the CUG-binding protein reduces DM protein kinase expression in COS cells.</title>
        <authorList>
            <person name="Takahashi N."/>
            <person name="Sasagawa N."/>
            <person name="Usuki F."/>
            <person name="Kino Y."/>
            <person name="Kawahara H."/>
            <person name="Sorimachi H."/>
            <person name="Maeda T."/>
            <person name="Suzuki K."/>
            <person name="Ishiura S."/>
        </authorList>
    </citation>
    <scope>NUCLEOTIDE SEQUENCE [MRNA] (ISOFORMS 1 AND 3)</scope>
    <source>
        <tissue>Brain</tissue>
        <tissue>Skeletal muscle</tissue>
    </source>
</reference>
<reference key="4">
    <citation type="journal article" date="2002" name="J. Biol. Chem.">
        <title>c-Jun ARE targets mRNA deadenylation by an EDEN-BP (embryo deadenylation element-binding protein)-dependent pathway.</title>
        <authorList>
            <person name="Paillard L."/>
            <person name="Legagneux V."/>
            <person name="Maniey D."/>
            <person name="Osborne H.B."/>
        </authorList>
    </citation>
    <scope>NUCLEOTIDE SEQUENCE [MRNA] (ISOFORM 1)</scope>
    <scope>RNA-BINDING</scope>
</reference>
<reference key="5">
    <citation type="journal article" date="2004" name="Nat. Genet.">
        <title>Complete sequencing and characterization of 21,243 full-length human cDNAs.</title>
        <authorList>
            <person name="Ota T."/>
            <person name="Suzuki Y."/>
            <person name="Nishikawa T."/>
            <person name="Otsuki T."/>
            <person name="Sugiyama T."/>
            <person name="Irie R."/>
            <person name="Wakamatsu A."/>
            <person name="Hayashi K."/>
            <person name="Sato H."/>
            <person name="Nagai K."/>
            <person name="Kimura K."/>
            <person name="Makita H."/>
            <person name="Sekine M."/>
            <person name="Obayashi M."/>
            <person name="Nishi T."/>
            <person name="Shibahara T."/>
            <person name="Tanaka T."/>
            <person name="Ishii S."/>
            <person name="Yamamoto J."/>
            <person name="Saito K."/>
            <person name="Kawai Y."/>
            <person name="Isono Y."/>
            <person name="Nakamura Y."/>
            <person name="Nagahari K."/>
            <person name="Murakami K."/>
            <person name="Yasuda T."/>
            <person name="Iwayanagi T."/>
            <person name="Wagatsuma M."/>
            <person name="Shiratori A."/>
            <person name="Sudo H."/>
            <person name="Hosoiri T."/>
            <person name="Kaku Y."/>
            <person name="Kodaira H."/>
            <person name="Kondo H."/>
            <person name="Sugawara M."/>
            <person name="Takahashi M."/>
            <person name="Kanda K."/>
            <person name="Yokoi T."/>
            <person name="Furuya T."/>
            <person name="Kikkawa E."/>
            <person name="Omura Y."/>
            <person name="Abe K."/>
            <person name="Kamihara K."/>
            <person name="Katsuta N."/>
            <person name="Sato K."/>
            <person name="Tanikawa M."/>
            <person name="Yamazaki M."/>
            <person name="Ninomiya K."/>
            <person name="Ishibashi T."/>
            <person name="Yamashita H."/>
            <person name="Murakawa K."/>
            <person name="Fujimori K."/>
            <person name="Tanai H."/>
            <person name="Kimata M."/>
            <person name="Watanabe M."/>
            <person name="Hiraoka S."/>
            <person name="Chiba Y."/>
            <person name="Ishida S."/>
            <person name="Ono Y."/>
            <person name="Takiguchi S."/>
            <person name="Watanabe S."/>
            <person name="Yosida M."/>
            <person name="Hotuta T."/>
            <person name="Kusano J."/>
            <person name="Kanehori K."/>
            <person name="Takahashi-Fujii A."/>
            <person name="Hara H."/>
            <person name="Tanase T.-O."/>
            <person name="Nomura Y."/>
            <person name="Togiya S."/>
            <person name="Komai F."/>
            <person name="Hara R."/>
            <person name="Takeuchi K."/>
            <person name="Arita M."/>
            <person name="Imose N."/>
            <person name="Musashino K."/>
            <person name="Yuuki H."/>
            <person name="Oshima A."/>
            <person name="Sasaki N."/>
            <person name="Aotsuka S."/>
            <person name="Yoshikawa Y."/>
            <person name="Matsunawa H."/>
            <person name="Ichihara T."/>
            <person name="Shiohata N."/>
            <person name="Sano S."/>
            <person name="Moriya S."/>
            <person name="Momiyama H."/>
            <person name="Satoh N."/>
            <person name="Takami S."/>
            <person name="Terashima Y."/>
            <person name="Suzuki O."/>
            <person name="Nakagawa S."/>
            <person name="Senoh A."/>
            <person name="Mizoguchi H."/>
            <person name="Goto Y."/>
            <person name="Shimizu F."/>
            <person name="Wakebe H."/>
            <person name="Hishigaki H."/>
            <person name="Watanabe T."/>
            <person name="Sugiyama A."/>
            <person name="Takemoto M."/>
            <person name="Kawakami B."/>
            <person name="Yamazaki M."/>
            <person name="Watanabe K."/>
            <person name="Kumagai A."/>
            <person name="Itakura S."/>
            <person name="Fukuzumi Y."/>
            <person name="Fujimori Y."/>
            <person name="Komiyama M."/>
            <person name="Tashiro H."/>
            <person name="Tanigami A."/>
            <person name="Fujiwara T."/>
            <person name="Ono T."/>
            <person name="Yamada K."/>
            <person name="Fujii Y."/>
            <person name="Ozaki K."/>
            <person name="Hirao M."/>
            <person name="Ohmori Y."/>
            <person name="Kawabata A."/>
            <person name="Hikiji T."/>
            <person name="Kobatake N."/>
            <person name="Inagaki H."/>
            <person name="Ikema Y."/>
            <person name="Okamoto S."/>
            <person name="Okitani R."/>
            <person name="Kawakami T."/>
            <person name="Noguchi S."/>
            <person name="Itoh T."/>
            <person name="Shigeta K."/>
            <person name="Senba T."/>
            <person name="Matsumura K."/>
            <person name="Nakajima Y."/>
            <person name="Mizuno T."/>
            <person name="Morinaga M."/>
            <person name="Sasaki M."/>
            <person name="Togashi T."/>
            <person name="Oyama M."/>
            <person name="Hata H."/>
            <person name="Watanabe M."/>
            <person name="Komatsu T."/>
            <person name="Mizushima-Sugano J."/>
            <person name="Satoh T."/>
            <person name="Shirai Y."/>
            <person name="Takahashi Y."/>
            <person name="Nakagawa K."/>
            <person name="Okumura K."/>
            <person name="Nagase T."/>
            <person name="Nomura N."/>
            <person name="Kikuchi H."/>
            <person name="Masuho Y."/>
            <person name="Yamashita R."/>
            <person name="Nakai K."/>
            <person name="Yada T."/>
            <person name="Nakamura Y."/>
            <person name="Ohara O."/>
            <person name="Isogai T."/>
            <person name="Sugano S."/>
        </authorList>
    </citation>
    <scope>NUCLEOTIDE SEQUENCE [LARGE SCALE MRNA] (ISOFORM 5)</scope>
    <source>
        <tissue>Trachea</tissue>
    </source>
</reference>
<reference key="6">
    <citation type="submission" date="2005-07" db="EMBL/GenBank/DDBJ databases">
        <title>Preparation of a set of expression-ready clones of mammalian long cDNAs encoding large proteins by the ORF trap cloning method.</title>
        <authorList>
            <person name="Nakajima D."/>
            <person name="Saito K."/>
            <person name="Yamakawa H."/>
            <person name="Kikuno R.F."/>
            <person name="Nakayama M."/>
            <person name="Ohara R."/>
            <person name="Okazaki N."/>
            <person name="Koga H."/>
            <person name="Nagase T."/>
            <person name="Ohara O."/>
        </authorList>
    </citation>
    <scope>NUCLEOTIDE SEQUENCE [LARGE SCALE MRNA] (ISOFORM 4)</scope>
    <source>
        <tissue>Brain</tissue>
    </source>
</reference>
<reference key="7">
    <citation type="journal article" date="2006" name="Nature">
        <title>Human chromosome 11 DNA sequence and analysis including novel gene identification.</title>
        <authorList>
            <person name="Taylor T.D."/>
            <person name="Noguchi H."/>
            <person name="Totoki Y."/>
            <person name="Toyoda A."/>
            <person name="Kuroki Y."/>
            <person name="Dewar K."/>
            <person name="Lloyd C."/>
            <person name="Itoh T."/>
            <person name="Takeda T."/>
            <person name="Kim D.-W."/>
            <person name="She X."/>
            <person name="Barlow K.F."/>
            <person name="Bloom T."/>
            <person name="Bruford E."/>
            <person name="Chang J.L."/>
            <person name="Cuomo C.A."/>
            <person name="Eichler E."/>
            <person name="FitzGerald M.G."/>
            <person name="Jaffe D.B."/>
            <person name="LaButti K."/>
            <person name="Nicol R."/>
            <person name="Park H.-S."/>
            <person name="Seaman C."/>
            <person name="Sougnez C."/>
            <person name="Yang X."/>
            <person name="Zimmer A.R."/>
            <person name="Zody M.C."/>
            <person name="Birren B.W."/>
            <person name="Nusbaum C."/>
            <person name="Fujiyama A."/>
            <person name="Hattori M."/>
            <person name="Rogers J."/>
            <person name="Lander E.S."/>
            <person name="Sakaki Y."/>
        </authorList>
    </citation>
    <scope>NUCLEOTIDE SEQUENCE [LARGE SCALE GENOMIC DNA]</scope>
</reference>
<reference key="8">
    <citation type="submission" date="2005-09" db="EMBL/GenBank/DDBJ databases">
        <authorList>
            <person name="Mural R.J."/>
            <person name="Istrail S."/>
            <person name="Sutton G.G."/>
            <person name="Florea L."/>
            <person name="Halpern A.L."/>
            <person name="Mobarry C.M."/>
            <person name="Lippert R."/>
            <person name="Walenz B."/>
            <person name="Shatkay H."/>
            <person name="Dew I."/>
            <person name="Miller J.R."/>
            <person name="Flanigan M.J."/>
            <person name="Edwards N.J."/>
            <person name="Bolanos R."/>
            <person name="Fasulo D."/>
            <person name="Halldorsson B.V."/>
            <person name="Hannenhalli S."/>
            <person name="Turner R."/>
            <person name="Yooseph S."/>
            <person name="Lu F."/>
            <person name="Nusskern D.R."/>
            <person name="Shue B.C."/>
            <person name="Zheng X.H."/>
            <person name="Zhong F."/>
            <person name="Delcher A.L."/>
            <person name="Huson D.H."/>
            <person name="Kravitz S.A."/>
            <person name="Mouchard L."/>
            <person name="Reinert K."/>
            <person name="Remington K.A."/>
            <person name="Clark A.G."/>
            <person name="Waterman M.S."/>
            <person name="Eichler E.E."/>
            <person name="Adams M.D."/>
            <person name="Hunkapiller M.W."/>
            <person name="Myers E.W."/>
            <person name="Venter J.C."/>
        </authorList>
    </citation>
    <scope>NUCLEOTIDE SEQUENCE [LARGE SCALE GENOMIC DNA]</scope>
</reference>
<reference key="9">
    <citation type="journal article" date="2004" name="Genome Res.">
        <title>The status, quality, and expansion of the NIH full-length cDNA project: the Mammalian Gene Collection (MGC).</title>
        <authorList>
            <consortium name="The MGC Project Team"/>
        </authorList>
    </citation>
    <scope>NUCLEOTIDE SEQUENCE [LARGE SCALE MRNA] (ISOFORM 3)</scope>
    <source>
        <tissue>Testis</tissue>
    </source>
</reference>
<reference key="10">
    <citation type="journal article" date="1999" name="Nucleic Acids Res.">
        <title>CUG repeat binding protein (CUGBP1) interacts with the 5' region of C/EBPbeta mRNA and regulates translation of C/EBPbeta isoforms.</title>
        <authorList>
            <person name="Timchenko N.A."/>
            <person name="Welm A.L."/>
            <person name="Lu X."/>
            <person name="Timchenko L.T."/>
        </authorList>
    </citation>
    <scope>FUNCTION</scope>
    <scope>RNA-BINDING</scope>
</reference>
<reference key="11">
    <citation type="journal article" date="2001" name="J. Biol. Chem.">
        <title>RNA CUG repeats sequester CUGBP1 and alter protein levels and activity of CUGBP1.</title>
        <authorList>
            <person name="Timchenko N.A."/>
            <person name="Cai Z.J."/>
            <person name="Welm A.L."/>
            <person name="Reddy S."/>
            <person name="Ashizawa T."/>
            <person name="Timchenko L.T."/>
        </authorList>
    </citation>
    <scope>FUNCTION</scope>
    <scope>RNA-BINDING</scope>
</reference>
<reference key="12">
    <citation type="journal article" date="2001" name="Mol. Cell. Biol.">
        <title>The CELF family of RNA binding proteins is implicated in cell-specific and developmentally regulated alternative splicing.</title>
        <authorList>
            <person name="Ladd A.N."/>
            <person name="Charlet-B N."/>
            <person name="Cooper T.A."/>
        </authorList>
    </citation>
    <scope>FUNCTION</scope>
    <scope>RNA-BINDING</scope>
    <scope>TISSUE SPECIFICITY</scope>
</reference>
<reference key="13">
    <citation type="journal article" date="2003" name="Biol. Cell">
        <title>A functional deadenylation assay identifies human CUG-BP as a deadenylation factor.</title>
        <authorList>
            <person name="Paillard L."/>
            <person name="Legagneux V."/>
            <person name="Beverley Osborne H."/>
        </authorList>
    </citation>
    <scope>FUNCTION</scope>
    <scope>MUTAGENESIS OF PHE-63; GLY-331 AND LEU-472</scope>
    <scope>RNA-BINDING</scope>
</reference>
<reference key="14">
    <citation type="journal article" date="2003" name="RNA">
        <title>Antagonistic regulation of alpha-actinin alternative splicing by CELF proteins and polypyrimidine tract binding protein.</title>
        <authorList>
            <person name="Gromak N."/>
            <person name="Matlin A.J."/>
            <person name="Cooper T.A."/>
            <person name="Smith C.W."/>
        </authorList>
    </citation>
    <scope>FUNCTION</scope>
    <scope>RNA-BINDING</scope>
</reference>
<reference key="15">
    <citation type="journal article" date="2004" name="EMBO J.">
        <title>Competition of CUGBP1 and calreticulin for the regulation of p21 translation determines cell fate.</title>
        <authorList>
            <person name="Iakova P."/>
            <person name="Wang G.-L."/>
            <person name="Timchenko L."/>
            <person name="Michalak M."/>
            <person name="Pereira-Smith O.M."/>
            <person name="Smith J.R."/>
            <person name="Timchenko N.A."/>
        </authorList>
    </citation>
    <scope>FUNCTION</scope>
    <scope>PHOSPHORYLATION</scope>
    <scope>RNA-BINDING</scope>
</reference>
<reference key="16">
    <citation type="journal article" date="2004" name="Genome Biol.">
        <title>An unappreciated role for RNA surveillance.</title>
        <authorList>
            <person name="Hillman R.T."/>
            <person name="Green R.E."/>
            <person name="Brenner S.E."/>
        </authorList>
    </citation>
    <scope>SPLICE ISOFORM(S) THAT ARE POTENTIAL NMD TARGET(S)</scope>
</reference>
<reference key="17">
    <citation type="journal article" date="2006" name="EMBO J.">
        <title>Interaction of muscleblind, CUG-BP1 and hnRNP H proteins in DM1-associated aberrant IR splicing.</title>
        <authorList>
            <person name="Paul S."/>
            <person name="Dansithong W."/>
            <person name="Kim D."/>
            <person name="Rossi J."/>
            <person name="Webster N.J."/>
            <person name="Comai L."/>
            <person name="Reddy S."/>
        </authorList>
    </citation>
    <scope>FUNCTION</scope>
    <scope>INTERACTION WITH HNRNPH1</scope>
    <scope>RNA-BINDING</scope>
    <scope>INDUCTION</scope>
</reference>
<reference key="18">
    <citation type="journal article" date="2006" name="J. Neurosci. Res.">
        <title>ETR-3 represses Tau exons 2/3 inclusion, a splicing event abnormally enhanced in myotonic dystrophy type I.</title>
        <authorList>
            <person name="Leroy O."/>
            <person name="Dhaenens C.-M."/>
            <person name="Schraen-Maschke S."/>
            <person name="Belarbi K."/>
            <person name="Delacourte A."/>
            <person name="Andreadis A."/>
            <person name="Sablonniere B."/>
            <person name="Buee L."/>
            <person name="Sergeant N."/>
            <person name="Caillet-Boudin M.-L."/>
        </authorList>
    </citation>
    <scope>TISSUE SPECIFICITY</scope>
</reference>
<reference key="19">
    <citation type="journal article" date="2006" name="RNA">
        <title>CUG-BP binds to RNA substrates and recruits PARN deadenylase.</title>
        <authorList>
            <person name="Moraes K.C."/>
            <person name="Wilusz C.J."/>
            <person name="Wilusz J."/>
        </authorList>
    </citation>
    <scope>FUNCTION</scope>
    <scope>INTERACTION WITH PARN</scope>
    <scope>RNA-BINDING</scope>
</reference>
<reference key="20">
    <citation type="journal article" date="2009" name="Anal. Chem.">
        <title>Lys-N and trypsin cover complementary parts of the phosphoproteome in a refined SCX-based approach.</title>
        <authorList>
            <person name="Gauci S."/>
            <person name="Helbig A.O."/>
            <person name="Slijper M."/>
            <person name="Krijgsveld J."/>
            <person name="Heck A.J."/>
            <person name="Mohammed S."/>
        </authorList>
    </citation>
    <scope>ACETYLATION [LARGE SCALE ANALYSIS] AT MET-1</scope>
    <scope>IDENTIFICATION BY MASS SPECTROMETRY [LARGE SCALE ANALYSIS]</scope>
</reference>
<reference key="21">
    <citation type="journal article" date="2011" name="BMC Syst. Biol.">
        <title>Initial characterization of the human central proteome.</title>
        <authorList>
            <person name="Burkard T.R."/>
            <person name="Planyavsky M."/>
            <person name="Kaupe I."/>
            <person name="Breitwieser F.P."/>
            <person name="Buerckstuemmer T."/>
            <person name="Bennett K.L."/>
            <person name="Superti-Furga G."/>
            <person name="Colinge J."/>
        </authorList>
    </citation>
    <scope>IDENTIFICATION BY MASS SPECTROMETRY [LARGE SCALE ANALYSIS]</scope>
</reference>
<reference key="22">
    <citation type="journal article" date="2013" name="J. Proteome Res.">
        <title>Toward a comprehensive characterization of a human cancer cell phosphoproteome.</title>
        <authorList>
            <person name="Zhou H."/>
            <person name="Di Palma S."/>
            <person name="Preisinger C."/>
            <person name="Peng M."/>
            <person name="Polat A.N."/>
            <person name="Heck A.J."/>
            <person name="Mohammed S."/>
        </authorList>
    </citation>
    <scope>PHOSPHORYLATION [LARGE SCALE ANALYSIS] AT THR-4 AND SER-179</scope>
    <scope>IDENTIFICATION BY MASS SPECTROMETRY [LARGE SCALE ANALYSIS]</scope>
    <source>
        <tissue>Erythroleukemia</tissue>
    </source>
</reference>
<reference key="23">
    <citation type="journal article" date="2014" name="J. Proteomics">
        <title>An enzyme assisted RP-RPLC approach for in-depth analysis of human liver phosphoproteome.</title>
        <authorList>
            <person name="Bian Y."/>
            <person name="Song C."/>
            <person name="Cheng K."/>
            <person name="Dong M."/>
            <person name="Wang F."/>
            <person name="Huang J."/>
            <person name="Sun D."/>
            <person name="Wang L."/>
            <person name="Ye M."/>
            <person name="Zou H."/>
        </authorList>
    </citation>
    <scope>IDENTIFICATION BY MASS SPECTROMETRY [LARGE SCALE ANALYSIS]</scope>
    <source>
        <tissue>Liver</tissue>
    </source>
</reference>
<reference key="24">
    <citation type="journal article" date="2017" name="Mol. Cell">
        <title>A Compendium of RNA-Binding Proteins that Regulate MicroRNA Biogenesis.</title>
        <authorList>
            <person name="Treiber T."/>
            <person name="Treiber N."/>
            <person name="Plessmann U."/>
            <person name="Harlander S."/>
            <person name="Daiss J.L."/>
            <person name="Eichner N."/>
            <person name="Lehmann G."/>
            <person name="Schall K."/>
            <person name="Urlaub H."/>
            <person name="Meister G."/>
        </authorList>
    </citation>
    <scope>FUNCTION</scope>
    <scope>MIRNA-BINDING</scope>
</reference>
<reference key="25">
    <citation type="journal article" date="2017" name="Nat. Struct. Mol. Biol.">
        <title>Site-specific mapping of the human SUMO proteome reveals co-modification with phosphorylation.</title>
        <authorList>
            <person name="Hendriks I.A."/>
            <person name="Lyon D."/>
            <person name="Young C."/>
            <person name="Jensen L.J."/>
            <person name="Vertegaal A.C."/>
            <person name="Nielsen M.L."/>
        </authorList>
    </citation>
    <scope>SUMOYLATION [LARGE SCALE ANALYSIS] AT LYS-109</scope>
    <scope>IDENTIFICATION BY MASS SPECTROMETRY [LARGE SCALE ANALYSIS]</scope>
</reference>
<reference key="26">
    <citation type="submission" date="2005-11" db="PDB data bank">
        <title>Solution structure of RNA-binding domain 3 in CUG triplet repeat RNA-binding protein 1.</title>
        <authorList>
            <consortium name="RIKEN structural genomics initiative (RSGI)"/>
        </authorList>
    </citation>
    <scope>STRUCTURE BY NMR OF 383-484</scope>
</reference>
<reference key="27">
    <citation type="journal article" date="2010" name="Structure">
        <title>Structural insights into RNA recognition by the alternate-splicing regulator CUG-binding protein 1.</title>
        <authorList>
            <person name="Teplova M."/>
            <person name="Song J."/>
            <person name="Gaw H.Y."/>
            <person name="Teplov A."/>
            <person name="Patel D.J."/>
        </authorList>
    </citation>
    <scope>X-RAY CRYSTALLOGRAPHY (1.85 ANGSTROMS) OF 14-187 IN COMPLEX WITH MRNA</scope>
    <scope>DOMAINS RRM</scope>
</reference>
<organism>
    <name type="scientific">Homo sapiens</name>
    <name type="common">Human</name>
    <dbReference type="NCBI Taxonomy" id="9606"/>
    <lineage>
        <taxon>Eukaryota</taxon>
        <taxon>Metazoa</taxon>
        <taxon>Chordata</taxon>
        <taxon>Craniata</taxon>
        <taxon>Vertebrata</taxon>
        <taxon>Euteleostomi</taxon>
        <taxon>Mammalia</taxon>
        <taxon>Eutheria</taxon>
        <taxon>Euarchontoglires</taxon>
        <taxon>Primates</taxon>
        <taxon>Haplorrhini</taxon>
        <taxon>Catarrhini</taxon>
        <taxon>Hominidae</taxon>
        <taxon>Homo</taxon>
    </lineage>
</organism>
<protein>
    <recommendedName>
        <fullName>CUGBP Elav-like family member 1</fullName>
        <shortName>CELF-1</shortName>
    </recommendedName>
    <alternativeName>
        <fullName>50 kDa nuclear polyadenylated RNA-binding protein</fullName>
    </alternativeName>
    <alternativeName>
        <fullName>Bruno-like protein 2</fullName>
    </alternativeName>
    <alternativeName>
        <fullName>CUG triplet repeat RNA-binding protein 1</fullName>
        <shortName>CUG-BP1</shortName>
    </alternativeName>
    <alternativeName>
        <fullName>CUG-BP- and ETR-3-like factor 1</fullName>
    </alternativeName>
    <alternativeName>
        <fullName>Deadenylation factor CUG-BP</fullName>
    </alternativeName>
    <alternativeName>
        <fullName>Embryo deadenylation element-binding protein homolog</fullName>
        <shortName>EDEN-BP homolog</shortName>
    </alternativeName>
    <alternativeName>
        <fullName>RNA-binding protein BRUNOL-2</fullName>
    </alternativeName>
</protein>
<name>CELF1_HUMAN</name>
<gene>
    <name type="primary">CELF1</name>
    <name type="synonym">BRUNOL2</name>
    <name type="synonym">CUGBP</name>
    <name type="synonym">CUGBP1</name>
    <name type="synonym">NAB50</name>
</gene>
<sequence>MNGTLDHPDQPDLDAIKMFVGQVPRTWSEKDLRELFEQYGAVYEINVLRDRSQNPPQSKGCCFVTFYTRKAALEAQNALHNMKVLPGMHHPIQMKPADSEKNNAVEDRKLFIGMISKKCTENDIRVMFSSFGQIEECRILRGPDGLSRGCAFVTFTTRAMAQTAIKAMHQAQTMEGCSSPMVVKFADTQKDKEQKRMAQQLQQQMQQISAASVWGNLAGLNTLGPQYLALYLQLLQQTASSGNLNTLSSLHPMGGLNAMQLQNLAALAAAASAAQNTPSGTNALTTSSSPLSVLTSSGSSPSSSSSNSVNPIASLGALQTLAGATAGLNVGSLAGMAALNGGLGSSGLSNGTGSTMEALTQAYSGIQQYAAAALPTLYNQNLLTQQSIGAAGSQKEGPEGANLFIYHLPQEFGDQDLLQMFMPFGNVVSAKVFIDKQTNLSKCFGFVSYDNPVSAQAAIQSMNGFQIGMKRLKVQLKRSKNDSKPY</sequence>
<keyword id="KW-0002">3D-structure</keyword>
<keyword id="KW-0007">Acetylation</keyword>
<keyword id="KW-0010">Activator</keyword>
<keyword id="KW-0025">Alternative splicing</keyword>
<keyword id="KW-0963">Cytoplasm</keyword>
<keyword id="KW-1017">Isopeptide bond</keyword>
<keyword id="KW-0507">mRNA processing</keyword>
<keyword id="KW-0508">mRNA splicing</keyword>
<keyword id="KW-0539">Nucleus</keyword>
<keyword id="KW-0597">Phosphoprotein</keyword>
<keyword id="KW-1267">Proteomics identification</keyword>
<keyword id="KW-1185">Reference proteome</keyword>
<keyword id="KW-0677">Repeat</keyword>
<keyword id="KW-0694">RNA-binding</keyword>
<keyword id="KW-0832">Ubl conjugation</keyword>
<accession>Q92879</accession>
<accession>B4E2U5</accession>
<accession>D3DQS0</accession>
<accession>F8W940</accession>
<accession>Q4LE52</accession>
<accession>Q9NP83</accession>
<accession>Q9NR06</accession>
<evidence type="ECO:0000250" key="1"/>
<evidence type="ECO:0000250" key="2">
    <source>
        <dbReference type="UniProtKB" id="P28659"/>
    </source>
</evidence>
<evidence type="ECO:0000255" key="3">
    <source>
        <dbReference type="PROSITE-ProRule" id="PRU00176"/>
    </source>
</evidence>
<evidence type="ECO:0000256" key="4">
    <source>
        <dbReference type="SAM" id="MobiDB-lite"/>
    </source>
</evidence>
<evidence type="ECO:0000269" key="5">
    <source>
    </source>
</evidence>
<evidence type="ECO:0000269" key="6">
    <source>
    </source>
</evidence>
<evidence type="ECO:0000269" key="7">
    <source>
    </source>
</evidence>
<evidence type="ECO:0000269" key="8">
    <source>
    </source>
</evidence>
<evidence type="ECO:0000269" key="9">
    <source>
    </source>
</evidence>
<evidence type="ECO:0000269" key="10">
    <source>
    </source>
</evidence>
<evidence type="ECO:0000269" key="11">
    <source>
    </source>
</evidence>
<evidence type="ECO:0000269" key="12">
    <source>
    </source>
</evidence>
<evidence type="ECO:0000269" key="13">
    <source>
    </source>
</evidence>
<evidence type="ECO:0000269" key="14">
    <source>
    </source>
</evidence>
<evidence type="ECO:0000269" key="15">
    <source>
    </source>
</evidence>
<evidence type="ECO:0000269" key="16">
    <source>
    </source>
</evidence>
<evidence type="ECO:0000269" key="17">
    <source>
    </source>
</evidence>
<evidence type="ECO:0000303" key="18">
    <source>
    </source>
</evidence>
<evidence type="ECO:0000303" key="19">
    <source>
    </source>
</evidence>
<evidence type="ECO:0000303" key="20">
    <source>
    </source>
</evidence>
<evidence type="ECO:0000303" key="21">
    <source>
    </source>
</evidence>
<evidence type="ECO:0000303" key="22">
    <source ref="6"/>
</evidence>
<evidence type="ECO:0000305" key="23"/>
<evidence type="ECO:0007744" key="24">
    <source>
    </source>
</evidence>
<evidence type="ECO:0007744" key="25">
    <source>
    </source>
</evidence>
<evidence type="ECO:0007744" key="26">
    <source>
    </source>
</evidence>
<evidence type="ECO:0007829" key="27">
    <source>
        <dbReference type="PDB" id="2CPZ"/>
    </source>
</evidence>
<evidence type="ECO:0007829" key="28">
    <source>
        <dbReference type="PDB" id="2DHS"/>
    </source>
</evidence>
<evidence type="ECO:0007829" key="29">
    <source>
        <dbReference type="PDB" id="2RQ4"/>
    </source>
</evidence>
<evidence type="ECO:0007829" key="30">
    <source>
        <dbReference type="PDB" id="2RQC"/>
    </source>
</evidence>
<evidence type="ECO:0007829" key="31">
    <source>
        <dbReference type="PDB" id="3NMR"/>
    </source>
</evidence>
<dbReference type="EMBL" id="U63289">
    <property type="protein sequence ID" value="AAC50895.1"/>
    <property type="molecule type" value="mRNA"/>
</dbReference>
<dbReference type="EMBL" id="AF248648">
    <property type="protein sequence ID" value="AAF86230.1"/>
    <property type="molecule type" value="mRNA"/>
</dbReference>
<dbReference type="EMBL" id="AF267533">
    <property type="protein sequence ID" value="AAF78955.1"/>
    <property type="molecule type" value="mRNA"/>
</dbReference>
<dbReference type="EMBL" id="AF267534">
    <property type="protein sequence ID" value="AAF78956.1"/>
    <property type="molecule type" value="mRNA"/>
</dbReference>
<dbReference type="EMBL" id="AJ007988">
    <property type="protein sequence ID" value="CAC20566.1"/>
    <property type="molecule type" value="mRNA"/>
</dbReference>
<dbReference type="EMBL" id="AK304430">
    <property type="protein sequence ID" value="BAG65257.1"/>
    <property type="molecule type" value="mRNA"/>
</dbReference>
<dbReference type="EMBL" id="AB210019">
    <property type="protein sequence ID" value="BAE06101.1"/>
    <property type="status" value="ALT_INIT"/>
    <property type="molecule type" value="mRNA"/>
</dbReference>
<dbReference type="EMBL" id="AC090559">
    <property type="status" value="NOT_ANNOTATED_CDS"/>
    <property type="molecule type" value="Genomic_DNA"/>
</dbReference>
<dbReference type="EMBL" id="CH471064">
    <property type="protein sequence ID" value="EAW67909.1"/>
    <property type="molecule type" value="Genomic_DNA"/>
</dbReference>
<dbReference type="EMBL" id="CH471064">
    <property type="protein sequence ID" value="EAW67912.1"/>
    <property type="molecule type" value="Genomic_DNA"/>
</dbReference>
<dbReference type="EMBL" id="BC031079">
    <property type="protein sequence ID" value="AAH31079.1"/>
    <property type="molecule type" value="mRNA"/>
</dbReference>
<dbReference type="CCDS" id="CCDS31482.1">
    <molecule id="Q92879-1"/>
</dbReference>
<dbReference type="CCDS" id="CCDS53622.1">
    <molecule id="Q92879-6"/>
</dbReference>
<dbReference type="CCDS" id="CCDS53623.1">
    <molecule id="Q92879-4"/>
</dbReference>
<dbReference type="CCDS" id="CCDS7938.1">
    <molecule id="Q92879-2"/>
</dbReference>
<dbReference type="CCDS" id="CCDS7939.1">
    <molecule id="Q92879-3"/>
</dbReference>
<dbReference type="RefSeq" id="NP_001020767.1">
    <molecule id="Q92879-1"/>
    <property type="nucleotide sequence ID" value="NM_001025596.3"/>
</dbReference>
<dbReference type="RefSeq" id="NP_001166110.1">
    <molecule id="Q92879-4"/>
    <property type="nucleotide sequence ID" value="NM_001172639.2"/>
</dbReference>
<dbReference type="RefSeq" id="NP_001166111.1">
    <molecule id="Q92879-6"/>
    <property type="nucleotide sequence ID" value="NM_001172640.2"/>
</dbReference>
<dbReference type="RefSeq" id="NP_001363313.1">
    <molecule id="Q92879-4"/>
    <property type="nucleotide sequence ID" value="NM_001376384.1"/>
</dbReference>
<dbReference type="RefSeq" id="NP_001363344.1">
    <molecule id="Q92879-1"/>
    <property type="nucleotide sequence ID" value="NM_001376415.1"/>
</dbReference>
<dbReference type="RefSeq" id="NP_001363346.1">
    <molecule id="Q92879-1"/>
    <property type="nucleotide sequence ID" value="NM_001376417.1"/>
</dbReference>
<dbReference type="RefSeq" id="NP_001363347.1">
    <molecule id="Q92879-1"/>
    <property type="nucleotide sequence ID" value="NM_001376418.1"/>
</dbReference>
<dbReference type="RefSeq" id="NP_001363348.1">
    <molecule id="Q92879-1"/>
    <property type="nucleotide sequence ID" value="NM_001376419.1"/>
</dbReference>
<dbReference type="RefSeq" id="NP_001363349.1">
    <molecule id="Q92879-1"/>
    <property type="nucleotide sequence ID" value="NM_001376420.1"/>
</dbReference>
<dbReference type="RefSeq" id="NP_001363350.1">
    <molecule id="Q92879-1"/>
    <property type="nucleotide sequence ID" value="NM_001376421.1"/>
</dbReference>
<dbReference type="RefSeq" id="NP_001363351.1">
    <molecule id="Q92879-1"/>
    <property type="nucleotide sequence ID" value="NM_001376422.1"/>
</dbReference>
<dbReference type="RefSeq" id="NP_001363353.1">
    <molecule id="Q92879-1"/>
    <property type="nucleotide sequence ID" value="NM_001376424.1"/>
</dbReference>
<dbReference type="RefSeq" id="NP_001363354.1">
    <molecule id="Q92879-1"/>
    <property type="nucleotide sequence ID" value="NM_001376425.1"/>
</dbReference>
<dbReference type="RefSeq" id="NP_001363355.1">
    <molecule id="Q92879-1"/>
    <property type="nucleotide sequence ID" value="NM_001376426.1"/>
</dbReference>
<dbReference type="RefSeq" id="NP_001363356.1">
    <molecule id="Q92879-1"/>
    <property type="nucleotide sequence ID" value="NM_001376427.1"/>
</dbReference>
<dbReference type="RefSeq" id="NP_001363357.1">
    <molecule id="Q92879-1"/>
    <property type="nucleotide sequence ID" value="NM_001376428.1"/>
</dbReference>
<dbReference type="RefSeq" id="NP_001363358.1">
    <molecule id="Q92879-1"/>
    <property type="nucleotide sequence ID" value="NM_001376429.1"/>
</dbReference>
<dbReference type="RefSeq" id="NP_001363359.1">
    <molecule id="Q92879-1"/>
    <property type="nucleotide sequence ID" value="NM_001376430.1"/>
</dbReference>
<dbReference type="RefSeq" id="NP_001363360.1">
    <molecule id="Q92879-6"/>
    <property type="nucleotide sequence ID" value="NM_001376431.1"/>
</dbReference>
<dbReference type="RefSeq" id="NP_001363363.1">
    <molecule id="Q92879-3"/>
    <property type="nucleotide sequence ID" value="NM_001376434.1"/>
</dbReference>
<dbReference type="RefSeq" id="NP_001363364.1">
    <molecule id="Q92879-3"/>
    <property type="nucleotide sequence ID" value="NM_001376435.1"/>
</dbReference>
<dbReference type="RefSeq" id="NP_001363365.1">
    <molecule id="Q92879-3"/>
    <property type="nucleotide sequence ID" value="NM_001376436.1"/>
</dbReference>
<dbReference type="RefSeq" id="NP_001363366.1">
    <molecule id="Q92879-3"/>
    <property type="nucleotide sequence ID" value="NM_001376437.1"/>
</dbReference>
<dbReference type="RefSeq" id="NP_001363367.1">
    <molecule id="Q92879-3"/>
    <property type="nucleotide sequence ID" value="NM_001376438.1"/>
</dbReference>
<dbReference type="RefSeq" id="NP_001363368.1">
    <molecule id="Q92879-3"/>
    <property type="nucleotide sequence ID" value="NM_001376439.1"/>
</dbReference>
<dbReference type="RefSeq" id="NP_001363369.1">
    <molecule id="Q92879-3"/>
    <property type="nucleotide sequence ID" value="NM_001376440.1"/>
</dbReference>
<dbReference type="RefSeq" id="NP_001363370.1">
    <molecule id="Q92879-3"/>
    <property type="nucleotide sequence ID" value="NM_001376441.1"/>
</dbReference>
<dbReference type="RefSeq" id="NP_001363371.1">
    <molecule id="Q92879-2"/>
    <property type="nucleotide sequence ID" value="NM_001376442.1"/>
</dbReference>
<dbReference type="RefSeq" id="NP_001363372.1">
    <molecule id="Q92879-2"/>
    <property type="nucleotide sequence ID" value="NM_001376443.1"/>
</dbReference>
<dbReference type="RefSeq" id="NP_001363373.1">
    <molecule id="Q92879-2"/>
    <property type="nucleotide sequence ID" value="NM_001376444.1"/>
</dbReference>
<dbReference type="RefSeq" id="NP_001363374.1">
    <molecule id="Q92879-2"/>
    <property type="nucleotide sequence ID" value="NM_001376445.1"/>
</dbReference>
<dbReference type="RefSeq" id="NP_001363375.1">
    <molecule id="Q92879-2"/>
    <property type="nucleotide sequence ID" value="NM_001376446.1"/>
</dbReference>
<dbReference type="RefSeq" id="NP_001363377.1">
    <molecule id="Q92879-2"/>
    <property type="nucleotide sequence ID" value="NM_001376448.1"/>
</dbReference>
<dbReference type="RefSeq" id="NP_001363378.1">
    <molecule id="Q92879-2"/>
    <property type="nucleotide sequence ID" value="NM_001376449.1"/>
</dbReference>
<dbReference type="RefSeq" id="NP_006551.1">
    <molecule id="Q92879-2"/>
    <property type="nucleotide sequence ID" value="NM_006560.4"/>
</dbReference>
<dbReference type="RefSeq" id="NP_941989.1">
    <molecule id="Q92879-3"/>
    <property type="nucleotide sequence ID" value="NM_198700.3"/>
</dbReference>
<dbReference type="RefSeq" id="XP_011518161.1">
    <property type="nucleotide sequence ID" value="XM_011519859.1"/>
</dbReference>
<dbReference type="RefSeq" id="XP_016872613.1">
    <property type="nucleotide sequence ID" value="XM_017017124.1"/>
</dbReference>
<dbReference type="RefSeq" id="XP_016872614.1">
    <property type="nucleotide sequence ID" value="XM_017017125.1"/>
</dbReference>
<dbReference type="RefSeq" id="XP_016872615.1">
    <property type="nucleotide sequence ID" value="XM_017017126.1"/>
</dbReference>
<dbReference type="RefSeq" id="XP_016872616.1">
    <property type="nucleotide sequence ID" value="XM_017017127.1"/>
</dbReference>
<dbReference type="RefSeq" id="XP_016872617.1">
    <property type="nucleotide sequence ID" value="XM_017017128.1"/>
</dbReference>
<dbReference type="RefSeq" id="XP_016872618.1">
    <property type="nucleotide sequence ID" value="XM_017017129.1"/>
</dbReference>
<dbReference type="RefSeq" id="XP_016872619.1">
    <property type="nucleotide sequence ID" value="XM_017017130.1"/>
</dbReference>
<dbReference type="RefSeq" id="XP_016872620.1">
    <property type="nucleotide sequence ID" value="XM_017017131.1"/>
</dbReference>
<dbReference type="RefSeq" id="XP_016872621.1">
    <property type="nucleotide sequence ID" value="XM_017017132.1"/>
</dbReference>
<dbReference type="RefSeq" id="XP_016872622.1">
    <property type="nucleotide sequence ID" value="XM_017017133.1"/>
</dbReference>
<dbReference type="RefSeq" id="XP_016872623.1">
    <property type="nucleotide sequence ID" value="XM_017017134.1"/>
</dbReference>
<dbReference type="RefSeq" id="XP_016872624.1">
    <property type="nucleotide sequence ID" value="XM_017017135.1"/>
</dbReference>
<dbReference type="RefSeq" id="XP_047282241.1">
    <molecule id="Q92879-1"/>
    <property type="nucleotide sequence ID" value="XM_047426285.1"/>
</dbReference>
<dbReference type="RefSeq" id="XP_047282242.1">
    <molecule id="Q92879-1"/>
    <property type="nucleotide sequence ID" value="XM_047426286.1"/>
</dbReference>
<dbReference type="RefSeq" id="XP_047282243.1">
    <molecule id="Q92879-1"/>
    <property type="nucleotide sequence ID" value="XM_047426287.1"/>
</dbReference>
<dbReference type="RefSeq" id="XP_047282244.1">
    <molecule id="Q92879-1"/>
    <property type="nucleotide sequence ID" value="XM_047426288.1"/>
</dbReference>
<dbReference type="RefSeq" id="XP_047282245.1">
    <molecule id="Q92879-1"/>
    <property type="nucleotide sequence ID" value="XM_047426289.1"/>
</dbReference>
<dbReference type="RefSeq" id="XP_047282246.1">
    <molecule id="Q92879-1"/>
    <property type="nucleotide sequence ID" value="XM_047426290.1"/>
</dbReference>
<dbReference type="RefSeq" id="XP_047282247.1">
    <molecule id="Q92879-3"/>
    <property type="nucleotide sequence ID" value="XM_047426291.1"/>
</dbReference>
<dbReference type="RefSeq" id="XP_047282248.1">
    <molecule id="Q92879-3"/>
    <property type="nucleotide sequence ID" value="XM_047426292.1"/>
</dbReference>
<dbReference type="RefSeq" id="XP_047282249.1">
    <molecule id="Q92879-2"/>
    <property type="nucleotide sequence ID" value="XM_047426293.1"/>
</dbReference>
<dbReference type="RefSeq" id="XP_047282250.1">
    <molecule id="Q92879-2"/>
    <property type="nucleotide sequence ID" value="XM_047426294.1"/>
</dbReference>
<dbReference type="RefSeq" id="XP_054223479.1">
    <molecule id="Q92879-1"/>
    <property type="nucleotide sequence ID" value="XM_054367504.1"/>
</dbReference>
<dbReference type="RefSeq" id="XP_054223480.1">
    <molecule id="Q92879-1"/>
    <property type="nucleotide sequence ID" value="XM_054367505.1"/>
</dbReference>
<dbReference type="RefSeq" id="XP_054223481.1">
    <molecule id="Q92879-1"/>
    <property type="nucleotide sequence ID" value="XM_054367506.1"/>
</dbReference>
<dbReference type="RefSeq" id="XP_054223482.1">
    <molecule id="Q92879-1"/>
    <property type="nucleotide sequence ID" value="XM_054367507.1"/>
</dbReference>
<dbReference type="RefSeq" id="XP_054223483.1">
    <molecule id="Q92879-1"/>
    <property type="nucleotide sequence ID" value="XM_054367508.1"/>
</dbReference>
<dbReference type="RefSeq" id="XP_054223484.1">
    <molecule id="Q92879-1"/>
    <property type="nucleotide sequence ID" value="XM_054367509.1"/>
</dbReference>
<dbReference type="RefSeq" id="XP_054223485.1">
    <molecule id="Q92879-3"/>
    <property type="nucleotide sequence ID" value="XM_054367510.1"/>
</dbReference>
<dbReference type="RefSeq" id="XP_054223486.1">
    <molecule id="Q92879-3"/>
    <property type="nucleotide sequence ID" value="XM_054367511.1"/>
</dbReference>
<dbReference type="RefSeq" id="XP_054223487.1">
    <molecule id="Q92879-3"/>
    <property type="nucleotide sequence ID" value="XM_054367512.1"/>
</dbReference>
<dbReference type="RefSeq" id="XP_054223488.1">
    <molecule id="Q92879-2"/>
    <property type="nucleotide sequence ID" value="XM_054367513.1"/>
</dbReference>
<dbReference type="RefSeq" id="XP_054223489.1">
    <molecule id="Q92879-2"/>
    <property type="nucleotide sequence ID" value="XM_054367514.1"/>
</dbReference>
<dbReference type="PDB" id="2CPZ">
    <property type="method" value="NMR"/>
    <property type="chains" value="A=383-484"/>
</dbReference>
<dbReference type="PDB" id="2DHS">
    <property type="method" value="NMR"/>
    <property type="chains" value="A=1-187"/>
</dbReference>
<dbReference type="PDB" id="2RQ4">
    <property type="method" value="NMR"/>
    <property type="chains" value="A=383-484"/>
</dbReference>
<dbReference type="PDB" id="2RQC">
    <property type="method" value="NMR"/>
    <property type="chains" value="A=383-484"/>
</dbReference>
<dbReference type="PDB" id="3NMR">
    <property type="method" value="X-ray"/>
    <property type="resolution" value="1.85 A"/>
    <property type="chains" value="A=14-187"/>
</dbReference>
<dbReference type="PDB" id="3NNA">
    <property type="method" value="X-ray"/>
    <property type="resolution" value="1.90 A"/>
    <property type="chains" value="A=14-187"/>
</dbReference>
<dbReference type="PDB" id="3NNC">
    <property type="method" value="X-ray"/>
    <property type="resolution" value="2.20 A"/>
    <property type="chains" value="A=14-187"/>
</dbReference>
<dbReference type="PDB" id="3NNH">
    <property type="method" value="X-ray"/>
    <property type="resolution" value="2.75 A"/>
    <property type="chains" value="A/B/C/D=14-100"/>
</dbReference>
<dbReference type="PDBsum" id="2CPZ"/>
<dbReference type="PDBsum" id="2DHS"/>
<dbReference type="PDBsum" id="2RQ4"/>
<dbReference type="PDBsum" id="2RQC"/>
<dbReference type="PDBsum" id="3NMR"/>
<dbReference type="PDBsum" id="3NNA"/>
<dbReference type="PDBsum" id="3NNC"/>
<dbReference type="PDBsum" id="3NNH"/>
<dbReference type="SMR" id="Q92879"/>
<dbReference type="BioGRID" id="115901">
    <property type="interactions" value="297"/>
</dbReference>
<dbReference type="FunCoup" id="Q92879">
    <property type="interactions" value="3495"/>
</dbReference>
<dbReference type="IntAct" id="Q92879">
    <property type="interactions" value="48"/>
</dbReference>
<dbReference type="MINT" id="Q92879"/>
<dbReference type="STRING" id="9606.ENSP00000436864"/>
<dbReference type="GlyCosmos" id="Q92879">
    <property type="glycosylation" value="7 sites, 1 glycan"/>
</dbReference>
<dbReference type="GlyGen" id="Q92879">
    <property type="glycosylation" value="7 sites, 1 O-linked glycan (7 sites)"/>
</dbReference>
<dbReference type="iPTMnet" id="Q92879"/>
<dbReference type="MetOSite" id="Q92879"/>
<dbReference type="PhosphoSitePlus" id="Q92879"/>
<dbReference type="SwissPalm" id="Q92879"/>
<dbReference type="BioMuta" id="CELF1"/>
<dbReference type="DMDM" id="17374605"/>
<dbReference type="jPOST" id="Q92879"/>
<dbReference type="MassIVE" id="Q92879"/>
<dbReference type="PaxDb" id="9606-ENSP00000435926"/>
<dbReference type="PeptideAtlas" id="Q92879"/>
<dbReference type="ProteomicsDB" id="30255"/>
<dbReference type="ProteomicsDB" id="75565">
    <molecule id="Q92879-1"/>
</dbReference>
<dbReference type="ProteomicsDB" id="75566">
    <molecule id="Q92879-2"/>
</dbReference>
<dbReference type="ProteomicsDB" id="75567">
    <molecule id="Q92879-3"/>
</dbReference>
<dbReference type="ProteomicsDB" id="75568">
    <molecule id="Q92879-4"/>
</dbReference>
<dbReference type="Pumba" id="Q92879"/>
<dbReference type="Antibodypedia" id="4239">
    <property type="antibodies" value="396 antibodies from 34 providers"/>
</dbReference>
<dbReference type="DNASU" id="10658"/>
<dbReference type="Ensembl" id="ENST00000310513.10">
    <molecule id="Q92879-2"/>
    <property type="protein sequence ID" value="ENSP00000308386.5"/>
    <property type="gene ID" value="ENSG00000149187.19"/>
</dbReference>
<dbReference type="Ensembl" id="ENST00000358597.7">
    <molecule id="Q92879-1"/>
    <property type="protein sequence ID" value="ENSP00000351409.3"/>
    <property type="gene ID" value="ENSG00000149187.19"/>
</dbReference>
<dbReference type="Ensembl" id="ENST00000361904.7">
    <molecule id="Q92879-3"/>
    <property type="protein sequence ID" value="ENSP00000354639.3"/>
    <property type="gene ID" value="ENSG00000149187.19"/>
</dbReference>
<dbReference type="Ensembl" id="ENST00000395290.6">
    <molecule id="Q92879-6"/>
    <property type="protein sequence ID" value="ENSP00000378705.2"/>
    <property type="gene ID" value="ENSG00000149187.19"/>
</dbReference>
<dbReference type="Ensembl" id="ENST00000395292.6">
    <molecule id="Q92879-3"/>
    <property type="protein sequence ID" value="ENSP00000378706.2"/>
    <property type="gene ID" value="ENSG00000149187.19"/>
</dbReference>
<dbReference type="Ensembl" id="ENST00000532048.5">
    <molecule id="Q92879-4"/>
    <property type="protein sequence ID" value="ENSP00000435926.1"/>
    <property type="gene ID" value="ENSG00000149187.19"/>
</dbReference>
<dbReference type="GeneID" id="10658"/>
<dbReference type="KEGG" id="hsa:10658"/>
<dbReference type="UCSC" id="uc001nfk.3">
    <molecule id="Q92879-1"/>
    <property type="organism name" value="human"/>
</dbReference>
<dbReference type="AGR" id="HGNC:2549"/>
<dbReference type="CTD" id="10658"/>
<dbReference type="DisGeNET" id="10658"/>
<dbReference type="GeneCards" id="CELF1"/>
<dbReference type="HGNC" id="HGNC:2549">
    <property type="gene designation" value="CELF1"/>
</dbReference>
<dbReference type="HPA" id="ENSG00000149187">
    <property type="expression patterns" value="Low tissue specificity"/>
</dbReference>
<dbReference type="MIM" id="601074">
    <property type="type" value="gene"/>
</dbReference>
<dbReference type="neXtProt" id="NX_Q92879"/>
<dbReference type="OpenTargets" id="ENSG00000149187"/>
<dbReference type="PharmGKB" id="PA27045"/>
<dbReference type="VEuPathDB" id="HostDB:ENSG00000149187"/>
<dbReference type="eggNOG" id="KOG0144">
    <property type="taxonomic scope" value="Eukaryota"/>
</dbReference>
<dbReference type="GeneTree" id="ENSGT00940000158970"/>
<dbReference type="HOGENOM" id="CLU_015367_0_2_1"/>
<dbReference type="InParanoid" id="Q92879"/>
<dbReference type="OrthoDB" id="410044at2759"/>
<dbReference type="PAN-GO" id="Q92879">
    <property type="GO annotations" value="6 GO annotations based on evolutionary models"/>
</dbReference>
<dbReference type="PhylomeDB" id="Q92879"/>
<dbReference type="TreeFam" id="TF314924"/>
<dbReference type="PathwayCommons" id="Q92879"/>
<dbReference type="SignaLink" id="Q92879"/>
<dbReference type="SIGNOR" id="Q92879"/>
<dbReference type="BioGRID-ORCS" id="10658">
    <property type="hits" value="43 hits in 1168 CRISPR screens"/>
</dbReference>
<dbReference type="CD-CODE" id="232F8A39">
    <property type="entry name" value="P-body"/>
</dbReference>
<dbReference type="CD-CODE" id="DEE660B4">
    <property type="entry name" value="Stress granule"/>
</dbReference>
<dbReference type="ChiTaRS" id="CELF1">
    <property type="organism name" value="human"/>
</dbReference>
<dbReference type="EvolutionaryTrace" id="Q92879"/>
<dbReference type="GeneWiki" id="CUGBP1"/>
<dbReference type="GenomeRNAi" id="10658"/>
<dbReference type="Pharos" id="Q92879">
    <property type="development level" value="Tbio"/>
</dbReference>
<dbReference type="PRO" id="PR:Q92879"/>
<dbReference type="Proteomes" id="UP000005640">
    <property type="component" value="Chromosome 11"/>
</dbReference>
<dbReference type="RNAct" id="Q92879">
    <property type="molecule type" value="protein"/>
</dbReference>
<dbReference type="Bgee" id="ENSG00000149187">
    <property type="expression patterns" value="Expressed in secondary oocyte and 216 other cell types or tissues"/>
</dbReference>
<dbReference type="ExpressionAtlas" id="Q92879">
    <property type="expression patterns" value="baseline and differential"/>
</dbReference>
<dbReference type="GO" id="GO:0005737">
    <property type="term" value="C:cytoplasm"/>
    <property type="evidence" value="ECO:0000318"/>
    <property type="project" value="GO_Central"/>
</dbReference>
<dbReference type="GO" id="GO:0010494">
    <property type="term" value="C:cytoplasmic stress granule"/>
    <property type="evidence" value="ECO:0000314"/>
    <property type="project" value="ARUK-UCL"/>
</dbReference>
<dbReference type="GO" id="GO:0016020">
    <property type="term" value="C:membrane"/>
    <property type="evidence" value="ECO:0007005"/>
    <property type="project" value="UniProtKB"/>
</dbReference>
<dbReference type="GO" id="GO:0005654">
    <property type="term" value="C:nucleoplasm"/>
    <property type="evidence" value="ECO:0000314"/>
    <property type="project" value="HPA"/>
</dbReference>
<dbReference type="GO" id="GO:0005634">
    <property type="term" value="C:nucleus"/>
    <property type="evidence" value="ECO:0000314"/>
    <property type="project" value="UniProtKB"/>
</dbReference>
<dbReference type="GO" id="GO:0097356">
    <property type="term" value="C:perinucleolar compartment"/>
    <property type="evidence" value="ECO:0000314"/>
    <property type="project" value="ARUK-UCL"/>
</dbReference>
<dbReference type="GO" id="GO:1990904">
    <property type="term" value="C:ribonucleoprotein complex"/>
    <property type="evidence" value="ECO:0000318"/>
    <property type="project" value="GO_Central"/>
</dbReference>
<dbReference type="GO" id="GO:0042835">
    <property type="term" value="F:BRE binding"/>
    <property type="evidence" value="ECO:0000314"/>
    <property type="project" value="UniProtKB"/>
</dbReference>
<dbReference type="GO" id="GO:0003730">
    <property type="term" value="F:mRNA 3'-UTR binding"/>
    <property type="evidence" value="ECO:0000314"/>
    <property type="project" value="ARUK-UCL"/>
</dbReference>
<dbReference type="GO" id="GO:0003729">
    <property type="term" value="F:mRNA binding"/>
    <property type="evidence" value="ECO:0000314"/>
    <property type="project" value="BHF-UCL"/>
</dbReference>
<dbReference type="GO" id="GO:0000900">
    <property type="term" value="F:mRNA regulatory element binding translation repressor activity"/>
    <property type="evidence" value="ECO:0000303"/>
    <property type="project" value="UniProtKB"/>
</dbReference>
<dbReference type="GO" id="GO:0036002">
    <property type="term" value="F:pre-mRNA binding"/>
    <property type="evidence" value="ECO:0000314"/>
    <property type="project" value="UniProtKB"/>
</dbReference>
<dbReference type="GO" id="GO:0003723">
    <property type="term" value="F:RNA binding"/>
    <property type="evidence" value="ECO:0000314"/>
    <property type="project" value="UniProtKB"/>
</dbReference>
<dbReference type="GO" id="GO:0009792">
    <property type="term" value="P:embryo development ending in birth or egg hatching"/>
    <property type="evidence" value="ECO:0000303"/>
    <property type="project" value="UniProtKB"/>
</dbReference>
<dbReference type="GO" id="GO:0007281">
    <property type="term" value="P:germ cell development"/>
    <property type="evidence" value="ECO:0000303"/>
    <property type="project" value="UniProtKB"/>
</dbReference>
<dbReference type="GO" id="GO:0061157">
    <property type="term" value="P:mRNA destabilization"/>
    <property type="evidence" value="ECO:0000250"/>
    <property type="project" value="ARUK-UCL"/>
</dbReference>
<dbReference type="GO" id="GO:0006397">
    <property type="term" value="P:mRNA processing"/>
    <property type="evidence" value="ECO:0000304"/>
    <property type="project" value="ProtInc"/>
</dbReference>
<dbReference type="GO" id="GO:0006376">
    <property type="term" value="P:mRNA splice site recognition"/>
    <property type="evidence" value="ECO:0000314"/>
    <property type="project" value="UniProtKB"/>
</dbReference>
<dbReference type="GO" id="GO:0008285">
    <property type="term" value="P:negative regulation of cell population proliferation"/>
    <property type="evidence" value="ECO:0000250"/>
    <property type="project" value="ARUK-UCL"/>
</dbReference>
<dbReference type="GO" id="GO:0010629">
    <property type="term" value="P:negative regulation of gene expression"/>
    <property type="evidence" value="ECO:0000315"/>
    <property type="project" value="ARUK-UCL"/>
</dbReference>
<dbReference type="GO" id="GO:0010628">
    <property type="term" value="P:positive regulation of gene expression"/>
    <property type="evidence" value="ECO:0000315"/>
    <property type="project" value="ARUK-UCL"/>
</dbReference>
<dbReference type="GO" id="GO:0016441">
    <property type="term" value="P:post-transcriptional gene silencing"/>
    <property type="evidence" value="ECO:0000314"/>
    <property type="project" value="ARUK-UCL"/>
</dbReference>
<dbReference type="GO" id="GO:0000381">
    <property type="term" value="P:regulation of alternative mRNA splicing, via spliceosome"/>
    <property type="evidence" value="ECO:0000318"/>
    <property type="project" value="GO_Central"/>
</dbReference>
<dbReference type="GO" id="GO:0050727">
    <property type="term" value="P:regulation of inflammatory response"/>
    <property type="evidence" value="ECO:0000315"/>
    <property type="project" value="ARUK-UCL"/>
</dbReference>
<dbReference type="GO" id="GO:0043484">
    <property type="term" value="P:regulation of RNA splicing"/>
    <property type="evidence" value="ECO:0000314"/>
    <property type="project" value="UniProtKB"/>
</dbReference>
<dbReference type="GO" id="GO:0035194">
    <property type="term" value="P:regulatory ncRNA-mediated post-transcriptional gene silencing"/>
    <property type="evidence" value="ECO:0000303"/>
    <property type="project" value="UniProtKB"/>
</dbReference>
<dbReference type="CDD" id="cd12631">
    <property type="entry name" value="RRM1_CELF1_2_Bruno"/>
    <property type="match status" value="1"/>
</dbReference>
<dbReference type="CDD" id="cd12634">
    <property type="entry name" value="RRM2_CELF1_2"/>
    <property type="match status" value="1"/>
</dbReference>
<dbReference type="CDD" id="cd12638">
    <property type="entry name" value="RRM3_CELF1_2"/>
    <property type="match status" value="1"/>
</dbReference>
<dbReference type="FunFam" id="3.30.70.330:FF:000013">
    <property type="entry name" value="CUGBP Elav-like family member 1 isoform 2"/>
    <property type="match status" value="1"/>
</dbReference>
<dbReference type="FunFam" id="3.30.70.330:FF:000015">
    <property type="entry name" value="CUGBP Elav-like family member 1 isoform 2"/>
    <property type="match status" value="1"/>
</dbReference>
<dbReference type="FunFam" id="3.30.70.330:FF:000016">
    <property type="entry name" value="CUGBP Elav-like family member 1 isoform 2"/>
    <property type="match status" value="1"/>
</dbReference>
<dbReference type="Gene3D" id="3.30.70.330">
    <property type="match status" value="3"/>
</dbReference>
<dbReference type="IDEAL" id="IID00490"/>
<dbReference type="InterPro" id="IPR034196">
    <property type="entry name" value="CELF1/2_RRM1"/>
</dbReference>
<dbReference type="InterPro" id="IPR034198">
    <property type="entry name" value="CELF1/2_RRM2"/>
</dbReference>
<dbReference type="InterPro" id="IPR034199">
    <property type="entry name" value="CELF1/2_RRM3"/>
</dbReference>
<dbReference type="InterPro" id="IPR012677">
    <property type="entry name" value="Nucleotide-bd_a/b_plait_sf"/>
</dbReference>
<dbReference type="InterPro" id="IPR035979">
    <property type="entry name" value="RBD_domain_sf"/>
</dbReference>
<dbReference type="InterPro" id="IPR000504">
    <property type="entry name" value="RRM_dom"/>
</dbReference>
<dbReference type="PANTHER" id="PTHR24012">
    <property type="entry name" value="RNA BINDING PROTEIN"/>
    <property type="match status" value="1"/>
</dbReference>
<dbReference type="Pfam" id="PF00076">
    <property type="entry name" value="RRM_1"/>
    <property type="match status" value="3"/>
</dbReference>
<dbReference type="SMART" id="SM00360">
    <property type="entry name" value="RRM"/>
    <property type="match status" value="3"/>
</dbReference>
<dbReference type="SUPFAM" id="SSF54928">
    <property type="entry name" value="RNA-binding domain, RBD"/>
    <property type="match status" value="2"/>
</dbReference>
<dbReference type="PROSITE" id="PS50102">
    <property type="entry name" value="RRM"/>
    <property type="match status" value="3"/>
</dbReference>
<comment type="function">
    <text evidence="1 5 7 8 9 10 11 12 14 16">RNA-binding protein implicated in the regulation of several post-transcriptional events. Involved in pre-mRNA alternative splicing, mRNA translation and stability. Mediates exon inclusion and/or exclusion in pre-mRNA that are subject to tissue-specific and developmentally regulated alternative splicing. Specifically activates exon 5 inclusion of cardiac isoforms of TNNT2 during heart remodeling at the juvenile to adult transition. Acts both as an activator and as a repressor of a pair of coregulated exons: promotes inclusion of the smooth muscle (SM) exon but exclusion of the non-muscle (NM) exon in actinin pre-mRNAs. Activates SM exon 5 inclusion by antagonizing the repressive effect of PTB. Promotes exclusion of exon 11 of the INSR pre-mRNA. Inhibits, together with HNRNPH1, insulin receptor (IR) pre-mRNA exon 11 inclusion in myoblast. Increases translation and controls the choice of translation initiation codon of CEBPB mRNA. Increases mRNA translation of CEBPB in aging liver (By similarity). Increases translation of CDKN1A mRNA by antagonizing the repressive effect of CALR3. Mediates rapid cytoplasmic mRNA deadenylation. Recruits the deadenylase PARN to the poly(A) tail of EDEN-containing mRNAs to promote their deadenylation. Required for completion of spermatogenesis (By similarity). Binds to (CUG)n triplet repeats in the 3'-UTR of transcripts such as DMPK and to Bruno response elements (BREs). Binds to muscle-specific splicing enhancer (MSE) intronic sites flanking the alternative exon 5 of TNNT2 pre-mRNA. Binds to AU-rich sequences (AREs or EDEN-like) localized in the 3'-UTR of JUN and FOS mRNAs. Binds to the IR RNA. Binds to the 5'-region of CDKN1A and CEBPB mRNAs. Binds with the 5'-region of CEBPB mRNA in aging liver. May be a specific regulator of miRNA biogenesis. Binds to primary microRNA pri-MIR140 and, with CELF2, negatively regulates the processing to mature miRNA (PubMed:28431233).</text>
</comment>
<comment type="subunit">
    <text evidence="1 12 14 15">Component of an EIF2 complex at least composed of CELF1/CUGBP1, CALR, CALR3, EIF2S1, EIF2S2, HSP90B1 and HSPA5. Associates with polysomes (By similarity). Interacts with HNRNPH1; the interaction in RNA-dependent. Interacts with PARN.</text>
</comment>
<comment type="interaction">
    <interactant intactId="EBI-21370617">
        <id>Q92879-3</id>
    </interactant>
    <interactant intactId="EBI-372899">
        <id>Q13148</id>
        <label>TARDBP</label>
    </interactant>
    <organismsDiffer>false</organismsDiffer>
    <experiments>3</experiments>
</comment>
<comment type="subcellular location">
    <subcellularLocation>
        <location evidence="17">Nucleus</location>
    </subcellularLocation>
    <subcellularLocation>
        <location evidence="17">Cytoplasm</location>
    </subcellularLocation>
    <text>RNA-binding activity is detected in both nuclear and cytoplasmic compartments.</text>
</comment>
<comment type="alternative products">
    <event type="alternative splicing"/>
    <isoform>
        <id>Q92879-1</id>
        <name>1</name>
        <name>LYLQ</name>
        <sequence type="displayed"/>
    </isoform>
    <isoform>
        <id>Q92879-2</id>
        <name>2</name>
        <sequence type="described" ref="VSP_005784"/>
    </isoform>
    <isoform>
        <id>Q92879-3</id>
        <name>3</name>
        <name>A</name>
        <sequence type="described" ref="VSP_005784 VSP_005785"/>
    </isoform>
    <isoform>
        <id>Q92879-4</id>
        <name>4</name>
        <sequence type="described" ref="VSP_026787 VSP_026788"/>
    </isoform>
    <isoform>
        <id>Q92879-5</id>
        <name>5</name>
        <sequence type="described" ref="VSP_045043 VSP_026788"/>
    </isoform>
    <isoform>
        <id>Q92879-6</id>
        <name>6</name>
        <sequence type="described" ref="VSP_026788"/>
    </isoform>
</comment>
<comment type="tissue specificity">
    <text evidence="6 8 13">Ubiquitous.</text>
</comment>
<comment type="induction">
    <text evidence="14">Up-regulated in myotonic dystrophy pathophysiology (DM).</text>
</comment>
<comment type="domain">
    <text evidence="15">RRM1 and RRM2 domains preferentially target UGU(U/G)-rich mRNA elements.</text>
</comment>
<comment type="PTM">
    <text evidence="11">Phosphorylated. Its phosphorylation status increases in senescent cells.</text>
</comment>
<comment type="miscellaneous">
    <molecule>Isoform 1</molecule>
    <text>May be produced at very low levels due to a premature stop codon in the mRNA, leading to nonsense-mediated mRNA decay.</text>
</comment>
<comment type="similarity">
    <text evidence="23">Belongs to the CELF/BRUNOL family.</text>
</comment>
<comment type="sequence caution" evidence="23">
    <conflict type="erroneous initiation">
        <sequence resource="EMBL-CDS" id="BAE06101"/>
    </conflict>
    <text>Extended N-terminus.</text>
</comment>
<proteinExistence type="evidence at protein level"/>
<feature type="chain" id="PRO_0000081538" description="CUGBP Elav-like family member 1">
    <location>
        <begin position="1"/>
        <end position="486"/>
    </location>
</feature>
<feature type="domain" description="RRM 1" evidence="3">
    <location>
        <begin position="16"/>
        <end position="99"/>
    </location>
</feature>
<feature type="domain" description="RRM 2" evidence="3">
    <location>
        <begin position="108"/>
        <end position="188"/>
    </location>
</feature>
<feature type="domain" description="RRM 3" evidence="3">
    <location>
        <begin position="401"/>
        <end position="479"/>
    </location>
</feature>
<feature type="region of interest" description="Disordered" evidence="4">
    <location>
        <begin position="277"/>
        <end position="309"/>
    </location>
</feature>
<feature type="compositionally biased region" description="Low complexity" evidence="4">
    <location>
        <begin position="284"/>
        <end position="309"/>
    </location>
</feature>
<feature type="modified residue" description="N-acetylmethionine" evidence="24">
    <location>
        <position position="1"/>
    </location>
</feature>
<feature type="modified residue" description="Phosphothreonine" evidence="25">
    <location>
        <position position="4"/>
    </location>
</feature>
<feature type="modified residue" description="Phosphoserine" evidence="25">
    <location>
        <position position="179"/>
    </location>
</feature>
<feature type="modified residue" description="Phosphoserine" evidence="2">
    <location>
        <position position="302"/>
    </location>
</feature>
<feature type="cross-link" description="Glycyl lysine isopeptide (Lys-Gly) (interchain with G-Cter in SUMO2)" evidence="26">
    <location>
        <position position="109"/>
    </location>
</feature>
<feature type="splice variant" id="VSP_045043" description="In isoform 5." evidence="19">
    <location>
        <begin position="1"/>
        <end position="17"/>
    </location>
</feature>
<feature type="splice variant" id="VSP_026787" description="In isoform 4." evidence="22">
    <original>M</original>
    <variation>MAAFKLDFLPEMMVDHCSLNSSPVSKKM</variation>
    <location>
        <position position="1"/>
    </location>
</feature>
<feature type="splice variant" id="VSP_026788" description="In isoform 4, isoform 5 and isoform 6." evidence="19 22">
    <location>
        <position position="104"/>
    </location>
</feature>
<feature type="splice variant" id="VSP_005784" description="In isoform 2 and isoform 3." evidence="18 20 21">
    <location>
        <begin position="231"/>
        <end position="234"/>
    </location>
</feature>
<feature type="splice variant" id="VSP_005785" description="In isoform 3." evidence="18 20">
    <original>S</original>
    <variation>SA</variation>
    <location>
        <position position="297"/>
    </location>
</feature>
<feature type="mutagenesis site" description="Does not reduce RNA-binding; when associated with D-331 and F-472. Abolishes ARE/EDEN-dependent deadenylation; when associated with D-331 and F-472." evidence="10">
    <original>F</original>
    <variation>L</variation>
    <location>
        <position position="63"/>
    </location>
</feature>
<feature type="mutagenesis site" description="Does not reduce RNA-binding; when associated with L-63 and F-472. Abolishes ARE/EDEN-dependent deadenylation; when associated with D-331 and F-472." evidence="10">
    <original>G</original>
    <variation>D</variation>
    <location>
        <position position="331"/>
    </location>
</feature>
<feature type="mutagenesis site" description="Does not reduce RNA-binding; when associated with L-63 and D-331. Abolishes ARE/EDEN-dependent deadenylation; when associated with D-331 and F-472." evidence="10">
    <original>L</original>
    <variation>F</variation>
    <location>
        <position position="472"/>
    </location>
</feature>
<feature type="strand" evidence="31">
    <location>
        <begin position="16"/>
        <end position="22"/>
    </location>
</feature>
<feature type="helix" evidence="31">
    <location>
        <begin position="29"/>
        <end position="37"/>
    </location>
</feature>
<feature type="strand" evidence="31">
    <location>
        <begin position="42"/>
        <end position="50"/>
    </location>
</feature>
<feature type="strand" evidence="31">
    <location>
        <begin position="52"/>
        <end position="55"/>
    </location>
</feature>
<feature type="strand" evidence="31">
    <location>
        <begin position="57"/>
        <end position="68"/>
    </location>
</feature>
<feature type="helix" evidence="31">
    <location>
        <begin position="69"/>
        <end position="79"/>
    </location>
</feature>
<feature type="turn" evidence="31">
    <location>
        <begin position="80"/>
        <end position="82"/>
    </location>
</feature>
<feature type="strand" evidence="31">
    <location>
        <begin position="93"/>
        <end position="96"/>
    </location>
</feature>
<feature type="helix" evidence="31">
    <location>
        <begin position="98"/>
        <end position="100"/>
    </location>
</feature>
<feature type="helix" evidence="31">
    <location>
        <begin position="105"/>
        <end position="107"/>
    </location>
</feature>
<feature type="strand" evidence="31">
    <location>
        <begin position="108"/>
        <end position="114"/>
    </location>
</feature>
<feature type="helix" evidence="31">
    <location>
        <begin position="121"/>
        <end position="128"/>
    </location>
</feature>
<feature type="helix" evidence="31">
    <location>
        <begin position="129"/>
        <end position="131"/>
    </location>
</feature>
<feature type="strand" evidence="31">
    <location>
        <begin position="134"/>
        <end position="141"/>
    </location>
</feature>
<feature type="turn" evidence="28">
    <location>
        <begin position="143"/>
        <end position="145"/>
    </location>
</feature>
<feature type="strand" evidence="31">
    <location>
        <begin position="147"/>
        <end position="157"/>
    </location>
</feature>
<feature type="helix" evidence="31">
    <location>
        <begin position="158"/>
        <end position="168"/>
    </location>
</feature>
<feature type="turn" evidence="28">
    <location>
        <begin position="169"/>
        <end position="171"/>
    </location>
</feature>
<feature type="turn" evidence="28">
    <location>
        <begin position="174"/>
        <end position="177"/>
    </location>
</feature>
<feature type="strand" evidence="31">
    <location>
        <begin position="182"/>
        <end position="185"/>
    </location>
</feature>
<feature type="helix" evidence="29">
    <location>
        <begin position="385"/>
        <end position="388"/>
    </location>
</feature>
<feature type="strand" evidence="29">
    <location>
        <begin position="389"/>
        <end position="391"/>
    </location>
</feature>
<feature type="turn" evidence="30">
    <location>
        <begin position="399"/>
        <end position="401"/>
    </location>
</feature>
<feature type="strand" evidence="27">
    <location>
        <begin position="403"/>
        <end position="407"/>
    </location>
</feature>
<feature type="helix" evidence="27">
    <location>
        <begin position="414"/>
        <end position="421"/>
    </location>
</feature>
<feature type="helix" evidence="27">
    <location>
        <begin position="422"/>
        <end position="424"/>
    </location>
</feature>
<feature type="strand" evidence="27">
    <location>
        <begin position="428"/>
        <end position="434"/>
    </location>
</feature>
<feature type="strand" evidence="27">
    <location>
        <begin position="436"/>
        <end position="438"/>
    </location>
</feature>
<feature type="strand" evidence="27">
    <location>
        <begin position="440"/>
        <end position="448"/>
    </location>
</feature>
<feature type="helix" evidence="27">
    <location>
        <begin position="452"/>
        <end position="462"/>
    </location>
</feature>
<feature type="strand" evidence="27">
    <location>
        <begin position="473"/>
        <end position="475"/>
    </location>
</feature>
<feature type="strand" evidence="29">
    <location>
        <begin position="482"/>
        <end position="484"/>
    </location>
</feature>